<organism>
    <name type="scientific">Francisella tularensis subsp. tularensis (strain SCHU S4 / Schu 4)</name>
    <dbReference type="NCBI Taxonomy" id="177416"/>
    <lineage>
        <taxon>Bacteria</taxon>
        <taxon>Pseudomonadati</taxon>
        <taxon>Pseudomonadota</taxon>
        <taxon>Gammaproteobacteria</taxon>
        <taxon>Thiotrichales</taxon>
        <taxon>Francisellaceae</taxon>
        <taxon>Francisella</taxon>
    </lineage>
</organism>
<keyword id="KW-1185">Reference proteome</keyword>
<keyword id="KW-0687">Ribonucleoprotein</keyword>
<keyword id="KW-0689">Ribosomal protein</keyword>
<keyword id="KW-0694">RNA-binding</keyword>
<keyword id="KW-0699">rRNA-binding</keyword>
<dbReference type="EMBL" id="AJ749949">
    <property type="protein sequence ID" value="CAG45331.1"/>
    <property type="molecule type" value="Genomic_DNA"/>
</dbReference>
<dbReference type="RefSeq" id="WP_003020499.1">
    <property type="nucleotide sequence ID" value="NZ_CP010290.1"/>
</dbReference>
<dbReference type="RefSeq" id="YP_169714.1">
    <property type="nucleotide sequence ID" value="NC_006570.2"/>
</dbReference>
<dbReference type="SMR" id="Q5NGX8"/>
<dbReference type="STRING" id="177416.FTT_0698"/>
<dbReference type="DNASU" id="3191158"/>
<dbReference type="EnsemblBacteria" id="CAG45331">
    <property type="protein sequence ID" value="CAG45331"/>
    <property type="gene ID" value="FTT_0698"/>
</dbReference>
<dbReference type="KEGG" id="ftu:FTT_0698"/>
<dbReference type="eggNOG" id="COG0184">
    <property type="taxonomic scope" value="Bacteria"/>
</dbReference>
<dbReference type="OrthoDB" id="9799262at2"/>
<dbReference type="Proteomes" id="UP000001174">
    <property type="component" value="Chromosome"/>
</dbReference>
<dbReference type="GO" id="GO:0022627">
    <property type="term" value="C:cytosolic small ribosomal subunit"/>
    <property type="evidence" value="ECO:0007669"/>
    <property type="project" value="TreeGrafter"/>
</dbReference>
<dbReference type="GO" id="GO:0019843">
    <property type="term" value="F:rRNA binding"/>
    <property type="evidence" value="ECO:0007669"/>
    <property type="project" value="UniProtKB-UniRule"/>
</dbReference>
<dbReference type="GO" id="GO:0003735">
    <property type="term" value="F:structural constituent of ribosome"/>
    <property type="evidence" value="ECO:0007669"/>
    <property type="project" value="InterPro"/>
</dbReference>
<dbReference type="GO" id="GO:0006412">
    <property type="term" value="P:translation"/>
    <property type="evidence" value="ECO:0007669"/>
    <property type="project" value="UniProtKB-UniRule"/>
</dbReference>
<dbReference type="CDD" id="cd00353">
    <property type="entry name" value="Ribosomal_S15p_S13e"/>
    <property type="match status" value="1"/>
</dbReference>
<dbReference type="FunFam" id="1.10.287.10:FF:000002">
    <property type="entry name" value="30S ribosomal protein S15"/>
    <property type="match status" value="1"/>
</dbReference>
<dbReference type="Gene3D" id="6.10.250.3130">
    <property type="match status" value="1"/>
</dbReference>
<dbReference type="Gene3D" id="1.10.287.10">
    <property type="entry name" value="S15/NS1, RNA-binding"/>
    <property type="match status" value="1"/>
</dbReference>
<dbReference type="HAMAP" id="MF_01343_B">
    <property type="entry name" value="Ribosomal_uS15_B"/>
    <property type="match status" value="1"/>
</dbReference>
<dbReference type="InterPro" id="IPR000589">
    <property type="entry name" value="Ribosomal_uS15"/>
</dbReference>
<dbReference type="InterPro" id="IPR005290">
    <property type="entry name" value="Ribosomal_uS15_bac-type"/>
</dbReference>
<dbReference type="InterPro" id="IPR009068">
    <property type="entry name" value="uS15_NS1_RNA-bd_sf"/>
</dbReference>
<dbReference type="NCBIfam" id="TIGR00952">
    <property type="entry name" value="S15_bact"/>
    <property type="match status" value="1"/>
</dbReference>
<dbReference type="PANTHER" id="PTHR23321">
    <property type="entry name" value="RIBOSOMAL PROTEIN S15, BACTERIAL AND ORGANELLAR"/>
    <property type="match status" value="1"/>
</dbReference>
<dbReference type="PANTHER" id="PTHR23321:SF26">
    <property type="entry name" value="SMALL RIBOSOMAL SUBUNIT PROTEIN US15M"/>
    <property type="match status" value="1"/>
</dbReference>
<dbReference type="Pfam" id="PF00312">
    <property type="entry name" value="Ribosomal_S15"/>
    <property type="match status" value="1"/>
</dbReference>
<dbReference type="SMART" id="SM01387">
    <property type="entry name" value="Ribosomal_S15"/>
    <property type="match status" value="1"/>
</dbReference>
<dbReference type="SUPFAM" id="SSF47060">
    <property type="entry name" value="S15/NS1 RNA-binding domain"/>
    <property type="match status" value="1"/>
</dbReference>
<dbReference type="PROSITE" id="PS00362">
    <property type="entry name" value="RIBOSOMAL_S15"/>
    <property type="match status" value="1"/>
</dbReference>
<sequence>MLTAQDKQKIIKENQLAESDTGSPEVQVALLTARINDLQGHFEAHKKDNHSRRGLLRLVSQRRKLLDYLHDKDVERYRSLIKKLNIRR</sequence>
<accession>Q5NGX8</accession>
<comment type="function">
    <text evidence="1">One of the primary rRNA binding proteins, it binds directly to 16S rRNA where it helps nucleate assembly of the platform of the 30S subunit by binding and bridging several RNA helices of the 16S rRNA.</text>
</comment>
<comment type="function">
    <text evidence="1">Forms an intersubunit bridge (bridge B4) with the 23S rRNA of the 50S subunit in the ribosome.</text>
</comment>
<comment type="subunit">
    <text evidence="1">Part of the 30S ribosomal subunit. Forms a bridge to the 50S subunit in the 70S ribosome, contacting the 23S rRNA.</text>
</comment>
<comment type="similarity">
    <text evidence="1">Belongs to the universal ribosomal protein uS15 family.</text>
</comment>
<reference key="1">
    <citation type="journal article" date="2005" name="Nat. Genet.">
        <title>The complete genome sequence of Francisella tularensis, the causative agent of tularemia.</title>
        <authorList>
            <person name="Larsson P."/>
            <person name="Oyston P.C.F."/>
            <person name="Chain P."/>
            <person name="Chu M.C."/>
            <person name="Duffield M."/>
            <person name="Fuxelius H.-H."/>
            <person name="Garcia E."/>
            <person name="Haelltorp G."/>
            <person name="Johansson D."/>
            <person name="Isherwood K.E."/>
            <person name="Karp P.D."/>
            <person name="Larsson E."/>
            <person name="Liu Y."/>
            <person name="Michell S."/>
            <person name="Prior J."/>
            <person name="Prior R."/>
            <person name="Malfatti S."/>
            <person name="Sjoestedt A."/>
            <person name="Svensson K."/>
            <person name="Thompson N."/>
            <person name="Vergez L."/>
            <person name="Wagg J.K."/>
            <person name="Wren B.W."/>
            <person name="Lindler L.E."/>
            <person name="Andersson S.G.E."/>
            <person name="Forsman M."/>
            <person name="Titball R.W."/>
        </authorList>
    </citation>
    <scope>NUCLEOTIDE SEQUENCE [LARGE SCALE GENOMIC DNA]</scope>
    <source>
        <strain>SCHU S4 / Schu 4</strain>
    </source>
</reference>
<gene>
    <name evidence="1" type="primary">rpsO</name>
    <name type="ordered locus">FTT_0698</name>
</gene>
<name>RS15_FRATT</name>
<evidence type="ECO:0000255" key="1">
    <source>
        <dbReference type="HAMAP-Rule" id="MF_01343"/>
    </source>
</evidence>
<evidence type="ECO:0000305" key="2"/>
<proteinExistence type="inferred from homology"/>
<protein>
    <recommendedName>
        <fullName evidence="1">Small ribosomal subunit protein uS15</fullName>
    </recommendedName>
    <alternativeName>
        <fullName evidence="2">30S ribosomal protein S15</fullName>
    </alternativeName>
</protein>
<feature type="chain" id="PRO_0000115440" description="Small ribosomal subunit protein uS15">
    <location>
        <begin position="1"/>
        <end position="88"/>
    </location>
</feature>